<protein>
    <recommendedName>
        <fullName>NADH-ubiquinone oxidoreductase chain 4L</fullName>
        <ecNumber>7.1.1.2</ecNumber>
    </recommendedName>
    <alternativeName>
        <fullName>NADH dehydrogenase subunit 4L</fullName>
    </alternativeName>
</protein>
<sequence length="98" mass="10926">MVLIKLNIIMAFMLALTGVLIYRSHLMSTLLCLEGMMLSLFIFMAAVITHFHMFSISMMPLILLVFSACEAGVGLALLVTISNTYGNDQVQNLNLLQW</sequence>
<name>NU4LM_METNU</name>
<organism>
    <name type="scientific">Metachirus nudicaudatus</name>
    <name type="common">Brown four-eyed opossum</name>
    <dbReference type="NCBI Taxonomy" id="42725"/>
    <lineage>
        <taxon>Eukaryota</taxon>
        <taxon>Metazoa</taxon>
        <taxon>Chordata</taxon>
        <taxon>Craniata</taxon>
        <taxon>Vertebrata</taxon>
        <taxon>Euteleostomi</taxon>
        <taxon>Mammalia</taxon>
        <taxon>Metatheria</taxon>
        <taxon>Didelphimorphia</taxon>
        <taxon>Didelphidae</taxon>
        <taxon>Metachirus</taxon>
    </lineage>
</organism>
<feature type="chain" id="PRO_0000275056" description="NADH-ubiquinone oxidoreductase chain 4L">
    <location>
        <begin position="1"/>
        <end position="98"/>
    </location>
</feature>
<feature type="transmembrane region" description="Helical" evidence="3">
    <location>
        <begin position="1"/>
        <end position="21"/>
    </location>
</feature>
<feature type="transmembrane region" description="Helical" evidence="3">
    <location>
        <begin position="36"/>
        <end position="56"/>
    </location>
</feature>
<feature type="transmembrane region" description="Helical" evidence="3">
    <location>
        <begin position="61"/>
        <end position="81"/>
    </location>
</feature>
<keyword id="KW-0249">Electron transport</keyword>
<keyword id="KW-0472">Membrane</keyword>
<keyword id="KW-0496">Mitochondrion</keyword>
<keyword id="KW-0999">Mitochondrion inner membrane</keyword>
<keyword id="KW-0520">NAD</keyword>
<keyword id="KW-0679">Respiratory chain</keyword>
<keyword id="KW-1278">Translocase</keyword>
<keyword id="KW-0812">Transmembrane</keyword>
<keyword id="KW-1133">Transmembrane helix</keyword>
<keyword id="KW-0813">Transport</keyword>
<keyword id="KW-0830">Ubiquinone</keyword>
<evidence type="ECO:0000250" key="1">
    <source>
        <dbReference type="UniProtKB" id="P03901"/>
    </source>
</evidence>
<evidence type="ECO:0000250" key="2">
    <source>
        <dbReference type="UniProtKB" id="P03902"/>
    </source>
</evidence>
<evidence type="ECO:0000255" key="3"/>
<evidence type="ECO:0000305" key="4"/>
<reference key="1">
    <citation type="journal article" date="2004" name="Gene">
        <title>Marsupial relationships and a timeline for marsupial radiation in South Gondwana.</title>
        <authorList>
            <person name="Nilsson M.A."/>
            <person name="Arnason U."/>
            <person name="Spencer P.B.S."/>
            <person name="Janke A."/>
        </authorList>
    </citation>
    <scope>NUCLEOTIDE SEQUENCE [GENOMIC DNA]</scope>
</reference>
<gene>
    <name type="primary">MT-ND4L</name>
    <name type="synonym">MTND4L</name>
    <name type="synonym">NADH4L</name>
    <name type="synonym">ND4L</name>
</gene>
<geneLocation type="mitochondrion"/>
<comment type="function">
    <text evidence="1">Core subunit of the mitochondrial membrane respiratory chain NADH dehydrogenase (Complex I) which catalyzes electron transfer from NADH through the respiratory chain, using ubiquinone as an electron acceptor. Part of the enzyme membrane arm which is embedded in the lipid bilayer and involved in proton translocation.</text>
</comment>
<comment type="catalytic activity">
    <reaction evidence="1">
        <text>a ubiquinone + NADH + 5 H(+)(in) = a ubiquinol + NAD(+) + 4 H(+)(out)</text>
        <dbReference type="Rhea" id="RHEA:29091"/>
        <dbReference type="Rhea" id="RHEA-COMP:9565"/>
        <dbReference type="Rhea" id="RHEA-COMP:9566"/>
        <dbReference type="ChEBI" id="CHEBI:15378"/>
        <dbReference type="ChEBI" id="CHEBI:16389"/>
        <dbReference type="ChEBI" id="CHEBI:17976"/>
        <dbReference type="ChEBI" id="CHEBI:57540"/>
        <dbReference type="ChEBI" id="CHEBI:57945"/>
        <dbReference type="EC" id="7.1.1.2"/>
    </reaction>
    <physiologicalReaction direction="left-to-right" evidence="1">
        <dbReference type="Rhea" id="RHEA:29092"/>
    </physiologicalReaction>
</comment>
<comment type="subunit">
    <text evidence="2">Core subunit of respiratory chain NADH dehydrogenase (Complex I) which is composed of 45 different subunits.</text>
</comment>
<comment type="subcellular location">
    <subcellularLocation>
        <location evidence="2">Mitochondrion inner membrane</location>
        <topology evidence="3">Multi-pass membrane protein</topology>
    </subcellularLocation>
</comment>
<comment type="similarity">
    <text evidence="4">Belongs to the complex I subunit 4L family.</text>
</comment>
<accession>Q5QS97</accession>
<proteinExistence type="inferred from homology"/>
<dbReference type="EC" id="7.1.1.2"/>
<dbReference type="EMBL" id="AJ639866">
    <property type="protein sequence ID" value="CAG26350.1"/>
    <property type="molecule type" value="Genomic_DNA"/>
</dbReference>
<dbReference type="RefSeq" id="YP_161177.1">
    <property type="nucleotide sequence ID" value="NC_006516.1"/>
</dbReference>
<dbReference type="SMR" id="Q5QS97"/>
<dbReference type="GeneID" id="3187179"/>
<dbReference type="CTD" id="4539"/>
<dbReference type="GO" id="GO:0005743">
    <property type="term" value="C:mitochondrial inner membrane"/>
    <property type="evidence" value="ECO:0000250"/>
    <property type="project" value="UniProtKB"/>
</dbReference>
<dbReference type="GO" id="GO:0045271">
    <property type="term" value="C:respiratory chain complex I"/>
    <property type="evidence" value="ECO:0000250"/>
    <property type="project" value="UniProtKB"/>
</dbReference>
<dbReference type="GO" id="GO:0008137">
    <property type="term" value="F:NADH dehydrogenase (ubiquinone) activity"/>
    <property type="evidence" value="ECO:0000250"/>
    <property type="project" value="UniProtKB"/>
</dbReference>
<dbReference type="GO" id="GO:0042773">
    <property type="term" value="P:ATP synthesis coupled electron transport"/>
    <property type="evidence" value="ECO:0007669"/>
    <property type="project" value="InterPro"/>
</dbReference>
<dbReference type="FunFam" id="1.10.287.3510:FF:000002">
    <property type="entry name" value="NADH-ubiquinone oxidoreductase chain 4L"/>
    <property type="match status" value="1"/>
</dbReference>
<dbReference type="Gene3D" id="1.10.287.3510">
    <property type="match status" value="1"/>
</dbReference>
<dbReference type="InterPro" id="IPR001133">
    <property type="entry name" value="NADH_UbQ_OxRdtase_chain4L/K"/>
</dbReference>
<dbReference type="InterPro" id="IPR039428">
    <property type="entry name" value="NUOK/Mnh_C1-like"/>
</dbReference>
<dbReference type="PANTHER" id="PTHR11434:SF0">
    <property type="entry name" value="NADH-UBIQUINONE OXIDOREDUCTASE CHAIN 4L"/>
    <property type="match status" value="1"/>
</dbReference>
<dbReference type="PANTHER" id="PTHR11434">
    <property type="entry name" value="NADH-UBIQUINONE OXIDOREDUCTASE SUBUNIT ND4L"/>
    <property type="match status" value="1"/>
</dbReference>
<dbReference type="Pfam" id="PF00420">
    <property type="entry name" value="Oxidored_q2"/>
    <property type="match status" value="1"/>
</dbReference>